<evidence type="ECO:0000250" key="1"/>
<evidence type="ECO:0000269" key="2">
    <source>
    </source>
</evidence>
<evidence type="ECO:0000269" key="3">
    <source>
    </source>
</evidence>
<evidence type="ECO:0000269" key="4">
    <source>
    </source>
</evidence>
<evidence type="ECO:0000269" key="5">
    <source>
    </source>
</evidence>
<evidence type="ECO:0000269" key="6">
    <source>
    </source>
</evidence>
<evidence type="ECO:0000269" key="7">
    <source>
    </source>
</evidence>
<evidence type="ECO:0000269" key="8">
    <source>
    </source>
</evidence>
<evidence type="ECO:0000269" key="9">
    <source>
    </source>
</evidence>
<evidence type="ECO:0000269" key="10">
    <source>
    </source>
</evidence>
<evidence type="ECO:0000269" key="11">
    <source>
    </source>
</evidence>
<evidence type="ECO:0000303" key="12">
    <source>
    </source>
</evidence>
<evidence type="ECO:0000305" key="13"/>
<evidence type="ECO:0000305" key="14">
    <source>
    </source>
</evidence>
<evidence type="ECO:0007829" key="15">
    <source>
        <dbReference type="PDB" id="6MRH"/>
    </source>
</evidence>
<evidence type="ECO:0007829" key="16">
    <source>
        <dbReference type="PDB" id="6O11"/>
    </source>
</evidence>
<evidence type="ECO:0007829" key="17">
    <source>
        <dbReference type="PDB" id="6UY5"/>
    </source>
</evidence>
<evidence type="ECO:0007829" key="18">
    <source>
        <dbReference type="PDB" id="7RUJ"/>
    </source>
</evidence>
<gene>
    <name type="primary">sufS</name>
    <name evidence="12" type="synonym">csdB</name>
    <name type="synonym">ynhB</name>
    <name type="ordered locus">b1680</name>
    <name type="ordered locus">JW1670</name>
</gene>
<accession>P77444</accession>
<name>SUFS_ECOLI</name>
<protein>
    <recommendedName>
        <fullName>Cysteine desulfurase</fullName>
        <ecNumber evidence="14">2.8.1.7</ecNumber>
    </recommendedName>
    <alternativeName>
        <fullName>Cysteine sulfinate desulfinase</fullName>
        <shortName>CSD</shortName>
        <ecNumber evidence="2">3.13.1.-</ecNumber>
    </alternativeName>
    <alternativeName>
        <fullName>Selenocysteine beta-lyase</fullName>
        <shortName>SCL</shortName>
    </alternativeName>
    <alternativeName>
        <fullName>Selenocysteine lyase</fullName>
        <ecNumber evidence="2">4.4.1.16</ecNumber>
    </alternativeName>
    <alternativeName>
        <fullName>Selenocysteine reductase</fullName>
    </alternativeName>
</protein>
<dbReference type="EC" id="2.8.1.7" evidence="14"/>
<dbReference type="EC" id="3.13.1.-" evidence="2"/>
<dbReference type="EC" id="4.4.1.16" evidence="2"/>
<dbReference type="EMBL" id="AB055108">
    <property type="protein sequence ID" value="BAB21542.1"/>
    <property type="molecule type" value="Genomic_DNA"/>
</dbReference>
<dbReference type="EMBL" id="U00096">
    <property type="protein sequence ID" value="AAC74750.1"/>
    <property type="molecule type" value="Genomic_DNA"/>
</dbReference>
<dbReference type="EMBL" id="AP009048">
    <property type="protein sequence ID" value="BAA15457.1"/>
    <property type="molecule type" value="Genomic_DNA"/>
</dbReference>
<dbReference type="PIR" id="H64925">
    <property type="entry name" value="H64925"/>
</dbReference>
<dbReference type="RefSeq" id="NP_416195.1">
    <property type="nucleotide sequence ID" value="NC_000913.3"/>
</dbReference>
<dbReference type="RefSeq" id="WP_000577988.1">
    <property type="nucleotide sequence ID" value="NZ_SSZK01000001.1"/>
</dbReference>
<dbReference type="PDB" id="1C0N">
    <property type="method" value="X-ray"/>
    <property type="resolution" value="2.80 A"/>
    <property type="chains" value="A=1-406"/>
</dbReference>
<dbReference type="PDB" id="1I29">
    <property type="method" value="X-ray"/>
    <property type="resolution" value="2.80 A"/>
    <property type="chains" value="A=1-406"/>
</dbReference>
<dbReference type="PDB" id="1JF9">
    <property type="method" value="X-ray"/>
    <property type="resolution" value="2.00 A"/>
    <property type="chains" value="A=1-406"/>
</dbReference>
<dbReference type="PDB" id="1KMJ">
    <property type="method" value="X-ray"/>
    <property type="resolution" value="2.00 A"/>
    <property type="chains" value="A=1-406"/>
</dbReference>
<dbReference type="PDB" id="1KMK">
    <property type="method" value="X-ray"/>
    <property type="resolution" value="2.20 A"/>
    <property type="chains" value="A=1-406"/>
</dbReference>
<dbReference type="PDB" id="5DB5">
    <property type="method" value="X-ray"/>
    <property type="resolution" value="2.75 A"/>
    <property type="chains" value="A/B=1-406"/>
</dbReference>
<dbReference type="PDB" id="6MR2">
    <property type="method" value="X-ray"/>
    <property type="resolution" value="2.40 A"/>
    <property type="chains" value="A=1-406"/>
</dbReference>
<dbReference type="PDB" id="6MR6">
    <property type="method" value="X-ray"/>
    <property type="resolution" value="2.02 A"/>
    <property type="chains" value="A=1-406"/>
</dbReference>
<dbReference type="PDB" id="6MRE">
    <property type="method" value="X-ray"/>
    <property type="resolution" value="2.50 A"/>
    <property type="chains" value="A=1-406"/>
</dbReference>
<dbReference type="PDB" id="6MRH">
    <property type="method" value="X-ray"/>
    <property type="resolution" value="2.02 A"/>
    <property type="chains" value="A=1-406"/>
</dbReference>
<dbReference type="PDB" id="6MRI">
    <property type="method" value="X-ray"/>
    <property type="resolution" value="2.62 A"/>
    <property type="chains" value="A=1-406"/>
</dbReference>
<dbReference type="PDB" id="6O10">
    <property type="method" value="X-ray"/>
    <property type="resolution" value="2.00 A"/>
    <property type="chains" value="A=1-406"/>
</dbReference>
<dbReference type="PDB" id="6O11">
    <property type="method" value="X-ray"/>
    <property type="resolution" value="1.84 A"/>
    <property type="chains" value="A=1-406"/>
</dbReference>
<dbReference type="PDB" id="6O12">
    <property type="method" value="X-ray"/>
    <property type="resolution" value="2.05 A"/>
    <property type="chains" value="A=1-406"/>
</dbReference>
<dbReference type="PDB" id="6O13">
    <property type="method" value="X-ray"/>
    <property type="resolution" value="2.20 A"/>
    <property type="chains" value="A=1-406"/>
</dbReference>
<dbReference type="PDB" id="6UY5">
    <property type="method" value="X-ray"/>
    <property type="resolution" value="1.50 A"/>
    <property type="chains" value="A/B=1-406"/>
</dbReference>
<dbReference type="PDB" id="7RRN">
    <property type="method" value="X-ray"/>
    <property type="resolution" value="2.30 A"/>
    <property type="chains" value="A=1-406"/>
</dbReference>
<dbReference type="PDB" id="7RUJ">
    <property type="method" value="X-ray"/>
    <property type="resolution" value="2.50 A"/>
    <property type="chains" value="A=1-406"/>
</dbReference>
<dbReference type="PDB" id="7RW3">
    <property type="method" value="X-ray"/>
    <property type="resolution" value="2.30 A"/>
    <property type="chains" value="A=1-406"/>
</dbReference>
<dbReference type="PDB" id="8VBS">
    <property type="method" value="X-ray"/>
    <property type="resolution" value="3.31 A"/>
    <property type="chains" value="A/B=1-406"/>
</dbReference>
<dbReference type="PDB" id="9D2D">
    <property type="method" value="X-ray"/>
    <property type="resolution" value="2.70 A"/>
    <property type="chains" value="A=1-406"/>
</dbReference>
<dbReference type="PDBsum" id="1C0N"/>
<dbReference type="PDBsum" id="1I29"/>
<dbReference type="PDBsum" id="1JF9"/>
<dbReference type="PDBsum" id="1KMJ"/>
<dbReference type="PDBsum" id="1KMK"/>
<dbReference type="PDBsum" id="5DB5"/>
<dbReference type="PDBsum" id="6MR2"/>
<dbReference type="PDBsum" id="6MR6"/>
<dbReference type="PDBsum" id="6MRE"/>
<dbReference type="PDBsum" id="6MRH"/>
<dbReference type="PDBsum" id="6MRI"/>
<dbReference type="PDBsum" id="6O10"/>
<dbReference type="PDBsum" id="6O11"/>
<dbReference type="PDBsum" id="6O12"/>
<dbReference type="PDBsum" id="6O13"/>
<dbReference type="PDBsum" id="6UY5"/>
<dbReference type="PDBsum" id="7RRN"/>
<dbReference type="PDBsum" id="7RUJ"/>
<dbReference type="PDBsum" id="7RW3"/>
<dbReference type="PDBsum" id="8VBS"/>
<dbReference type="PDBsum" id="9D2D"/>
<dbReference type="SMR" id="P77444"/>
<dbReference type="BioGRID" id="4260281">
    <property type="interactions" value="107"/>
</dbReference>
<dbReference type="BioGRID" id="850545">
    <property type="interactions" value="4"/>
</dbReference>
<dbReference type="ComplexPortal" id="CPX-2124">
    <property type="entry name" value="sufS cysteine desulfurase complex"/>
</dbReference>
<dbReference type="DIP" id="DIP-9324N"/>
<dbReference type="FunCoup" id="P77444">
    <property type="interactions" value="699"/>
</dbReference>
<dbReference type="IntAct" id="P77444">
    <property type="interactions" value="14"/>
</dbReference>
<dbReference type="STRING" id="511145.b1680"/>
<dbReference type="DrugBank" id="DB04217">
    <property type="generic name" value="L-2-amino-3-butynoic acid"/>
</dbReference>
<dbReference type="DrugBank" id="DB02761">
    <property type="generic name" value="S-Mercaptocysteine"/>
</dbReference>
<dbReference type="DrugBank" id="DB03049">
    <property type="generic name" value="S-Selanyl Cysteine"/>
</dbReference>
<dbReference type="DrugBank" id="DB02345">
    <property type="generic name" value="Selenocysteine"/>
</dbReference>
<dbReference type="jPOST" id="P77444"/>
<dbReference type="PaxDb" id="511145-b1680"/>
<dbReference type="EnsemblBacteria" id="AAC74750">
    <property type="protein sequence ID" value="AAC74750"/>
    <property type="gene ID" value="b1680"/>
</dbReference>
<dbReference type="GeneID" id="946185"/>
<dbReference type="KEGG" id="ecj:JW1670"/>
<dbReference type="KEGG" id="eco:b1680"/>
<dbReference type="KEGG" id="ecoc:C3026_09625"/>
<dbReference type="PATRIC" id="fig|1411691.4.peg.578"/>
<dbReference type="EchoBASE" id="EB3720"/>
<dbReference type="eggNOG" id="COG0520">
    <property type="taxonomic scope" value="Bacteria"/>
</dbReference>
<dbReference type="HOGENOM" id="CLU_003433_2_5_6"/>
<dbReference type="InParanoid" id="P77444"/>
<dbReference type="OMA" id="LVTWQQI"/>
<dbReference type="OrthoDB" id="9808002at2"/>
<dbReference type="PhylomeDB" id="P77444"/>
<dbReference type="BioCyc" id="EcoCyc:G6906-MONOMER"/>
<dbReference type="BioCyc" id="MetaCyc:G6906-MONOMER"/>
<dbReference type="BRENDA" id="2.8.1.7">
    <property type="organism ID" value="2026"/>
</dbReference>
<dbReference type="BRENDA" id="4.4.1.16">
    <property type="organism ID" value="2026"/>
</dbReference>
<dbReference type="UniPathway" id="UPA00266"/>
<dbReference type="EvolutionaryTrace" id="P77444"/>
<dbReference type="PRO" id="PR:P77444"/>
<dbReference type="Proteomes" id="UP000000625">
    <property type="component" value="Chromosome"/>
</dbReference>
<dbReference type="GO" id="GO:0005737">
    <property type="term" value="C:cytoplasm"/>
    <property type="evidence" value="ECO:0007669"/>
    <property type="project" value="UniProtKB-SubCell"/>
</dbReference>
<dbReference type="GO" id="GO:0031071">
    <property type="term" value="F:cysteine desulfurase activity"/>
    <property type="evidence" value="ECO:0000314"/>
    <property type="project" value="EcoCyc"/>
</dbReference>
<dbReference type="GO" id="GO:0008826">
    <property type="term" value="F:cysteine sulfinate desulfinase activity"/>
    <property type="evidence" value="ECO:0007669"/>
    <property type="project" value="RHEA"/>
</dbReference>
<dbReference type="GO" id="GO:0016787">
    <property type="term" value="F:hydrolase activity"/>
    <property type="evidence" value="ECO:0007669"/>
    <property type="project" value="UniProtKB-KW"/>
</dbReference>
<dbReference type="GO" id="GO:0042803">
    <property type="term" value="F:protein homodimerization activity"/>
    <property type="evidence" value="ECO:0000314"/>
    <property type="project" value="EcoCyc"/>
</dbReference>
<dbReference type="GO" id="GO:0030170">
    <property type="term" value="F:pyridoxal phosphate binding"/>
    <property type="evidence" value="ECO:0000314"/>
    <property type="project" value="EcoCyc"/>
</dbReference>
<dbReference type="GO" id="GO:0009000">
    <property type="term" value="F:selenocysteine lyase activity"/>
    <property type="evidence" value="ECO:0000314"/>
    <property type="project" value="EcoCyc"/>
</dbReference>
<dbReference type="GO" id="GO:0006534">
    <property type="term" value="P:cysteine metabolic process"/>
    <property type="evidence" value="ECO:0007669"/>
    <property type="project" value="InterPro"/>
</dbReference>
<dbReference type="GO" id="GO:0016226">
    <property type="term" value="P:iron-sulfur cluster assembly"/>
    <property type="evidence" value="ECO:0000314"/>
    <property type="project" value="EcoCyc"/>
</dbReference>
<dbReference type="GO" id="GO:0001887">
    <property type="term" value="P:selenium compound metabolic process"/>
    <property type="evidence" value="ECO:0000316"/>
    <property type="project" value="EcoCyc"/>
</dbReference>
<dbReference type="GO" id="GO:0006790">
    <property type="term" value="P:sulfur compound metabolic process"/>
    <property type="evidence" value="ECO:0000314"/>
    <property type="project" value="EcoCyc"/>
</dbReference>
<dbReference type="CDD" id="cd06453">
    <property type="entry name" value="SufS_like"/>
    <property type="match status" value="1"/>
</dbReference>
<dbReference type="FunFam" id="3.40.640.10:FF:000042">
    <property type="entry name" value="Cysteine desulfurase"/>
    <property type="match status" value="1"/>
</dbReference>
<dbReference type="Gene3D" id="3.90.1150.10">
    <property type="entry name" value="Aspartate Aminotransferase, domain 1"/>
    <property type="match status" value="1"/>
</dbReference>
<dbReference type="Gene3D" id="3.40.640.10">
    <property type="entry name" value="Type I PLP-dependent aspartate aminotransferase-like (Major domain)"/>
    <property type="match status" value="1"/>
</dbReference>
<dbReference type="HAMAP" id="MF_01831">
    <property type="entry name" value="SufS_aminotrans_5"/>
    <property type="match status" value="1"/>
</dbReference>
<dbReference type="InterPro" id="IPR000192">
    <property type="entry name" value="Aminotrans_V_dom"/>
</dbReference>
<dbReference type="InterPro" id="IPR020578">
    <property type="entry name" value="Aminotrans_V_PyrdxlP_BS"/>
</dbReference>
<dbReference type="InterPro" id="IPR010970">
    <property type="entry name" value="Cys_dSase_SufS"/>
</dbReference>
<dbReference type="InterPro" id="IPR015424">
    <property type="entry name" value="PyrdxlP-dep_Trfase"/>
</dbReference>
<dbReference type="InterPro" id="IPR015421">
    <property type="entry name" value="PyrdxlP-dep_Trfase_major"/>
</dbReference>
<dbReference type="InterPro" id="IPR015422">
    <property type="entry name" value="PyrdxlP-dep_Trfase_small"/>
</dbReference>
<dbReference type="NCBIfam" id="NF006791">
    <property type="entry name" value="PRK09295.1"/>
    <property type="match status" value="1"/>
</dbReference>
<dbReference type="NCBIfam" id="TIGR01979">
    <property type="entry name" value="sufS"/>
    <property type="match status" value="1"/>
</dbReference>
<dbReference type="PANTHER" id="PTHR43586">
    <property type="entry name" value="CYSTEINE DESULFURASE"/>
    <property type="match status" value="1"/>
</dbReference>
<dbReference type="PANTHER" id="PTHR43586:SF25">
    <property type="entry name" value="CYSTEINE DESULFURASE"/>
    <property type="match status" value="1"/>
</dbReference>
<dbReference type="Pfam" id="PF00266">
    <property type="entry name" value="Aminotran_5"/>
    <property type="match status" value="1"/>
</dbReference>
<dbReference type="SUPFAM" id="SSF53383">
    <property type="entry name" value="PLP-dependent transferases"/>
    <property type="match status" value="1"/>
</dbReference>
<dbReference type="PROSITE" id="PS00595">
    <property type="entry name" value="AA_TRANSFER_CLASS_5"/>
    <property type="match status" value="1"/>
</dbReference>
<sequence length="406" mass="44434">MIFSVDKVRADFPVLSREVNGLPLAYLDSAASAQKPSQVIDAEAEFYRHGYAAVHRGIHTLSAQATEKMENVRKRASLFINARSAEELVFVRGTTEGINLVANSWGNSNVRAGDNIIISQMEHHANIVPWQMLCARVGAELRVIPLNPDGTLQLETLPTLFDEKTRLLAITHVSNVLGTENPLAEMITLAHQHGAKVLVDGAQAVMHHPVDVQALDCDFYVFSGHKLYGPTGIGILYVKEALLQEMPPWEGGGSMIATVSLSEGTTWTKAPWRFEAGTPNTGGIIGLGAALEYVSALGLNNIAEYEQNLMHYALSQLESVPDLTLYGPQNRLGVIAFNLGKHHAYDVGSFLDNYGIAVRTGHHCAMPLMAYYNVPAMCRASLAMYNTHEEVDRLVTGLQRIHRLLG</sequence>
<organism>
    <name type="scientific">Escherichia coli (strain K12)</name>
    <dbReference type="NCBI Taxonomy" id="83333"/>
    <lineage>
        <taxon>Bacteria</taxon>
        <taxon>Pseudomonadati</taxon>
        <taxon>Pseudomonadota</taxon>
        <taxon>Gammaproteobacteria</taxon>
        <taxon>Enterobacterales</taxon>
        <taxon>Enterobacteriaceae</taxon>
        <taxon>Escherichia</taxon>
    </lineage>
</organism>
<keyword id="KW-0002">3D-structure</keyword>
<keyword id="KW-0963">Cytoplasm</keyword>
<keyword id="KW-0903">Direct protein sequencing</keyword>
<keyword id="KW-0378">Hydrolase</keyword>
<keyword id="KW-0456">Lyase</keyword>
<keyword id="KW-0663">Pyridoxal phosphate</keyword>
<keyword id="KW-1185">Reference proteome</keyword>
<keyword id="KW-0808">Transferase</keyword>
<proteinExistence type="evidence at protein level"/>
<reference key="1">
    <citation type="journal article" date="1999" name="J. Biol. Chem.">
        <title>A nifS-like gene, csdB, encodes an Escherichia coli counterpart of mammalian selenocysteine lyase. Gene cloning, purification, characterization and preliminary X-ray crystallographic studies.</title>
        <authorList>
            <person name="Mihara H."/>
            <person name="Maeda M."/>
            <person name="Fujii T."/>
            <person name="Kurihara T."/>
            <person name="Hata Y."/>
            <person name="Esaki N."/>
        </authorList>
    </citation>
    <scope>NUCLEOTIDE SEQUENCE [GENOMIC DNA]</scope>
    <scope>PROTEIN SEQUENCE OF 1-10</scope>
    <scope>FUNCTION</scope>
    <scope>CATALYTIC ACTIVITY</scope>
    <scope>COFACTOR</scope>
    <scope>SUBUNIT</scope>
    <scope>X-RAY CRYSTALLOGRAPHY (2.8 ANGSTROMS)</scope>
    <source>
        <strain>K12</strain>
    </source>
</reference>
<reference key="2">
    <citation type="journal article" date="1996" name="DNA Res.">
        <title>A 570-kb DNA sequence of the Escherichia coli K-12 genome corresponding to the 28.0-40.1 min region on the linkage map.</title>
        <authorList>
            <person name="Aiba H."/>
            <person name="Baba T."/>
            <person name="Fujita K."/>
            <person name="Hayashi K."/>
            <person name="Inada T."/>
            <person name="Isono K."/>
            <person name="Itoh T."/>
            <person name="Kasai H."/>
            <person name="Kashimoto K."/>
            <person name="Kimura S."/>
            <person name="Kitakawa M."/>
            <person name="Kitagawa M."/>
            <person name="Makino K."/>
            <person name="Miki T."/>
            <person name="Mizobuchi K."/>
            <person name="Mori H."/>
            <person name="Mori T."/>
            <person name="Motomura K."/>
            <person name="Nakade S."/>
            <person name="Nakamura Y."/>
            <person name="Nashimoto H."/>
            <person name="Nishio Y."/>
            <person name="Oshima T."/>
            <person name="Saito N."/>
            <person name="Sampei G."/>
            <person name="Seki Y."/>
            <person name="Sivasundaram S."/>
            <person name="Tagami H."/>
            <person name="Takeda J."/>
            <person name="Takemoto K."/>
            <person name="Takeuchi Y."/>
            <person name="Wada C."/>
            <person name="Yamamoto Y."/>
            <person name="Horiuchi T."/>
        </authorList>
    </citation>
    <scope>NUCLEOTIDE SEQUENCE [LARGE SCALE GENOMIC DNA]</scope>
    <source>
        <strain>K12 / W3110 / ATCC 27325 / DSM 5911</strain>
    </source>
</reference>
<reference key="3">
    <citation type="journal article" date="1997" name="Science">
        <title>The complete genome sequence of Escherichia coli K-12.</title>
        <authorList>
            <person name="Blattner F.R."/>
            <person name="Plunkett G. III"/>
            <person name="Bloch C.A."/>
            <person name="Perna N.T."/>
            <person name="Burland V."/>
            <person name="Riley M."/>
            <person name="Collado-Vides J."/>
            <person name="Glasner J.D."/>
            <person name="Rode C.K."/>
            <person name="Mayhew G.F."/>
            <person name="Gregor J."/>
            <person name="Davis N.W."/>
            <person name="Kirkpatrick H.A."/>
            <person name="Goeden M.A."/>
            <person name="Rose D.J."/>
            <person name="Mau B."/>
            <person name="Shao Y."/>
        </authorList>
    </citation>
    <scope>NUCLEOTIDE SEQUENCE [LARGE SCALE GENOMIC DNA]</scope>
    <source>
        <strain>K12 / MG1655 / ATCC 47076</strain>
    </source>
</reference>
<reference key="4">
    <citation type="journal article" date="2006" name="Mol. Syst. Biol.">
        <title>Highly accurate genome sequences of Escherichia coli K-12 strains MG1655 and W3110.</title>
        <authorList>
            <person name="Hayashi K."/>
            <person name="Morooka N."/>
            <person name="Yamamoto Y."/>
            <person name="Fujita K."/>
            <person name="Isono K."/>
            <person name="Choi S."/>
            <person name="Ohtsubo E."/>
            <person name="Baba T."/>
            <person name="Wanner B.L."/>
            <person name="Mori H."/>
            <person name="Horiuchi T."/>
        </authorList>
    </citation>
    <scope>NUCLEOTIDE SEQUENCE [LARGE SCALE GENOMIC DNA]</scope>
    <source>
        <strain>K12 / W3110 / ATCC 27325 / DSM 5911</strain>
    </source>
</reference>
<reference key="5">
    <citation type="journal article" date="1999" name="J. Bacteriol.">
        <title>SufS is a NifS-like protein, and SufD is necessary for stability of the 2Fe-2S FhuF protein in Escherichia coli.</title>
        <authorList>
            <person name="Patzer S.I."/>
            <person name="Hantke K."/>
        </authorList>
    </citation>
    <scope>GENE NAME</scope>
    <source>
        <strain>K12 / MG1655 / ATCC 47076</strain>
    </source>
</reference>
<reference key="6">
    <citation type="journal article" date="2000" name="J. Biol. Chem.">
        <title>Escherichia coli NifS-like proteins provide selenium in the pathway for the biosynthesis of selenophosphate.</title>
        <authorList>
            <person name="Lacourciere G.M."/>
            <person name="Mihara H."/>
            <person name="Kurihara T."/>
            <person name="Esaki N."/>
            <person name="Stadtman T.C."/>
        </authorList>
    </citation>
    <scope>FUNCTION</scope>
</reference>
<reference key="7">
    <citation type="journal article" date="2000" name="J. Biochem.">
        <title>Kinetic and mutational studies of three NifS homologs from Escherichia coli: mechanistic difference between L-cysteine desulfurase and L-selenocysteine lyase reactions.</title>
        <authorList>
            <person name="Mihara H."/>
            <person name="Kurihara T."/>
            <person name="Yoshimura T."/>
            <person name="Esaki N."/>
        </authorList>
    </citation>
    <scope>MUTAGENESIS OF CYS-364</scope>
</reference>
<reference key="8">
    <citation type="journal article" date="2002" name="J. Biol. Chem.">
        <title>A third bacterial system for the assembly of iron-sulfur clusters with homologs in archaea and plastids.</title>
        <authorList>
            <person name="Takahashi Y."/>
            <person name="Tokumoto U."/>
        </authorList>
    </citation>
    <scope>FUNCTION IN FE-S CLUSTER SYSTEM</scope>
</reference>
<reference key="9">
    <citation type="journal article" date="2002" name="Proc. Natl. Acad. Sci. U.S.A.">
        <title>The iscS gene is essential for the biosynthesis of 2-selenouridine in tRNA and the selenocysteine-containing formate dehydrogenase H.</title>
        <authorList>
            <person name="Mihara H."/>
            <person name="Kato S."/>
            <person name="Lacourciere G.M."/>
            <person name="Stadtman T.C."/>
            <person name="Kennedy R.A.J.D."/>
            <person name="Kurihara T."/>
            <person name="Tokumoto U."/>
            <person name="Takahashi Y."/>
            <person name="Esaki N."/>
        </authorList>
    </citation>
    <scope>FUNCTION</scope>
</reference>
<reference key="10">
    <citation type="journal article" date="2003" name="J. Biol. Chem.">
        <title>Biogenesis of Fe-S cluster by the bacterial Suf system: SufS and SufE form a new type of cysteine desulfurase.</title>
        <authorList>
            <person name="Loiseau L."/>
            <person name="Ollagnier-de-Choudens S."/>
            <person name="Nachin L."/>
            <person name="Fontecave M."/>
            <person name="Barras F."/>
        </authorList>
    </citation>
    <scope>FUNCTION</scope>
    <scope>ACTIVITY REGULATION</scope>
    <scope>INTERACTION WITH SUFE AND SUFBCD COMPLEX</scope>
    <source>
        <strain>K12 / TG1</strain>
    </source>
</reference>
<reference key="11">
    <citation type="journal article" date="2003" name="J. Biol. Chem.">
        <title>The SufE protein and the SufBCD complex enhance SufS cysteine desulfurase activity as part of a sulfur transfer pathway for Fe-S cluster assembly in Escherichia coli.</title>
        <authorList>
            <person name="Outten F.W."/>
            <person name="Wood M.J."/>
            <person name="Munoz F.M."/>
            <person name="Storz G."/>
        </authorList>
    </citation>
    <scope>FUNCTION</scope>
    <scope>ACTIVITY REGULATION</scope>
    <scope>INTERACTION WITH SUFE AND SUFBCD COMPLEX</scope>
    <source>
        <strain>K12 / MG1655 / ATCC 47076</strain>
    </source>
</reference>
<reference key="12">
    <citation type="journal article" date="2003" name="FEBS Lett.">
        <title>Mechanistic studies of the SufS-SufE cysteine desulfurase: evidence for sulfur transfer from SufS to SufE.</title>
        <authorList>
            <person name="Ollagnier-de-Choudens S."/>
            <person name="Lascoux D."/>
            <person name="Loiseau L."/>
            <person name="Barras F."/>
            <person name="Forest E."/>
            <person name="Fontecave M."/>
        </authorList>
    </citation>
    <scope>ACTIVITY REGULATION</scope>
    <scope>INTERACTION WITH SUFE</scope>
</reference>
<reference key="13">
    <citation type="journal article" date="2000" name="Biochemistry">
        <title>Structure of a NifS homologue: X-ray structure analysis of CsdB, an Escherichia coli counterpart of mammalian selenocysteine lyase.</title>
        <authorList>
            <person name="Fujii T."/>
            <person name="Maeda M."/>
            <person name="Mihara H."/>
            <person name="Kurihara T."/>
            <person name="Esaki N."/>
            <person name="Hata Y."/>
        </authorList>
    </citation>
    <scope>X-RAY CRYSTALLOGRAPHY (2.8 ANGSTROMS)</scope>
</reference>
<reference key="14">
    <citation type="journal article" date="2002" name="J. Biochem.">
        <title>Structure of external aldimine of Escherichia coli CsdB, an IscS/NifS homolog: implications for its specificity toward selenocysteine.</title>
        <authorList>
            <person name="Mihara H."/>
            <person name="Fujii T."/>
            <person name="Kato S."/>
            <person name="Kurihara T."/>
            <person name="Hata Y."/>
            <person name="Esaki N."/>
        </authorList>
    </citation>
    <scope>X-RAY CRYSTALLOGRAPHY (2.8 ANGSTROMS)</scope>
    <scope>MUTAGENESIS OF HIS-55; HIS-123 AND ARG-379</scope>
</reference>
<reference key="15">
    <citation type="journal article" date="2002" name="J. Mol. Biol.">
        <title>Analysis of the E. coli NifS CsdB protein at 2.0 A reveals the structural basis for perselenide and persulfide intermediate formation.</title>
        <authorList>
            <person name="Lima C.D."/>
        </authorList>
    </citation>
    <scope>X-RAY CRYSTALLOGRAPHY (2.0 ANGSTROMS) OF APOPROTEIN AND IN COMPLEX WITH L-CYSTEINE AND L-SELENOCYSTEINE</scope>
    <scope>PYRIDOXAL PHOSPHATE AT LYS-226</scope>
</reference>
<feature type="chain" id="PRO_0000150329" description="Cysteine desulfurase">
    <location>
        <begin position="1"/>
        <end position="406"/>
    </location>
</feature>
<feature type="active site" description="Cysteine persulfide intermediate">
    <location>
        <position position="364"/>
    </location>
</feature>
<feature type="modified residue" description="N6-(pyridoxal phosphate)lysine">
    <location>
        <position position="226"/>
    </location>
</feature>
<feature type="mutagenesis site" description="No effect." evidence="6">
    <original>H</original>
    <variation>A</variation>
    <location>
        <position position="55"/>
    </location>
</feature>
<feature type="mutagenesis site" description="Loss of function; possibly due to destabilization of PLP in the active site." evidence="6">
    <original>H</original>
    <variation>A</variation>
    <location>
        <position position="123"/>
    </location>
</feature>
<feature type="mutagenesis site" description="Abolishes activity towards L-cysteine but not towards selenocysteine." evidence="3">
    <original>C</original>
    <variation>A</variation>
    <location>
        <position position="364"/>
    </location>
</feature>
<feature type="mutagenesis site" description="Loss of function." evidence="6">
    <original>R</original>
    <variation>A</variation>
    <location>
        <position position="379"/>
    </location>
</feature>
<feature type="helix" evidence="17">
    <location>
        <begin position="5"/>
        <end position="9"/>
    </location>
</feature>
<feature type="helix" evidence="17">
    <location>
        <begin position="13"/>
        <end position="16"/>
    </location>
</feature>
<feature type="turn" evidence="17">
    <location>
        <begin position="29"/>
        <end position="31"/>
    </location>
</feature>
<feature type="helix" evidence="17">
    <location>
        <begin position="37"/>
        <end position="49"/>
    </location>
</feature>
<feature type="strand" evidence="16">
    <location>
        <begin position="54"/>
        <end position="56"/>
    </location>
</feature>
<feature type="helix" evidence="17">
    <location>
        <begin position="60"/>
        <end position="79"/>
    </location>
</feature>
<feature type="helix" evidence="17">
    <location>
        <begin position="85"/>
        <end position="87"/>
    </location>
</feature>
<feature type="strand" evidence="17">
    <location>
        <begin position="88"/>
        <end position="92"/>
    </location>
</feature>
<feature type="helix" evidence="17">
    <location>
        <begin position="94"/>
        <end position="109"/>
    </location>
</feature>
<feature type="strand" evidence="17">
    <location>
        <begin position="115"/>
        <end position="119"/>
    </location>
</feature>
<feature type="helix" evidence="17">
    <location>
        <begin position="124"/>
        <end position="126"/>
    </location>
</feature>
<feature type="helix" evidence="17">
    <location>
        <begin position="128"/>
        <end position="137"/>
    </location>
</feature>
<feature type="strand" evidence="17">
    <location>
        <begin position="140"/>
        <end position="144"/>
    </location>
</feature>
<feature type="helix" evidence="17">
    <location>
        <begin position="154"/>
        <end position="156"/>
    </location>
</feature>
<feature type="helix" evidence="17">
    <location>
        <begin position="157"/>
        <end position="160"/>
    </location>
</feature>
<feature type="strand" evidence="17">
    <location>
        <begin position="165"/>
        <end position="173"/>
    </location>
</feature>
<feature type="turn" evidence="17">
    <location>
        <begin position="175"/>
        <end position="177"/>
    </location>
</feature>
<feature type="helix" evidence="17">
    <location>
        <begin position="183"/>
        <end position="192"/>
    </location>
</feature>
<feature type="strand" evidence="17">
    <location>
        <begin position="196"/>
        <end position="200"/>
    </location>
</feature>
<feature type="turn" evidence="17">
    <location>
        <begin position="202"/>
        <end position="207"/>
    </location>
</feature>
<feature type="helix" evidence="17">
    <location>
        <begin position="212"/>
        <end position="215"/>
    </location>
</feature>
<feature type="strand" evidence="17">
    <location>
        <begin position="218"/>
        <end position="224"/>
    </location>
</feature>
<feature type="turn" evidence="17">
    <location>
        <begin position="225"/>
        <end position="228"/>
    </location>
</feature>
<feature type="strand" evidence="17">
    <location>
        <begin position="234"/>
        <end position="238"/>
    </location>
</feature>
<feature type="helix" evidence="17">
    <location>
        <begin position="240"/>
        <end position="243"/>
    </location>
</feature>
<feature type="turn" evidence="18">
    <location>
        <begin position="250"/>
        <end position="252"/>
    </location>
</feature>
<feature type="turn" evidence="15">
    <location>
        <begin position="253"/>
        <end position="255"/>
    </location>
</feature>
<feature type="strand" evidence="17">
    <location>
        <begin position="256"/>
        <end position="260"/>
    </location>
</feature>
<feature type="turn" evidence="17">
    <location>
        <begin position="261"/>
        <end position="263"/>
    </location>
</feature>
<feature type="strand" evidence="17">
    <location>
        <begin position="264"/>
        <end position="267"/>
    </location>
</feature>
<feature type="helix" evidence="17">
    <location>
        <begin position="272"/>
        <end position="274"/>
    </location>
</feature>
<feature type="helix" evidence="17">
    <location>
        <begin position="281"/>
        <end position="297"/>
    </location>
</feature>
<feature type="helix" evidence="17">
    <location>
        <begin position="299"/>
        <end position="317"/>
    </location>
</feature>
<feature type="strand" evidence="17">
    <location>
        <begin position="323"/>
        <end position="327"/>
    </location>
</feature>
<feature type="strand" evidence="17">
    <location>
        <begin position="333"/>
        <end position="339"/>
    </location>
</feature>
<feature type="helix" evidence="17">
    <location>
        <begin position="344"/>
        <end position="353"/>
    </location>
</feature>
<feature type="strand" evidence="17">
    <location>
        <begin position="359"/>
        <end position="361"/>
    </location>
</feature>
<feature type="helix" evidence="17">
    <location>
        <begin position="366"/>
        <end position="371"/>
    </location>
</feature>
<feature type="strand" evidence="17">
    <location>
        <begin position="377"/>
        <end position="381"/>
    </location>
</feature>
<feature type="helix" evidence="17">
    <location>
        <begin position="388"/>
        <end position="405"/>
    </location>
</feature>
<comment type="function">
    <text evidence="2 4 7 8 9 10">Cysteine desulfurases mobilize the sulfur from L-cysteine to yield L-alanine, an essential step in sulfur metabolism for biosynthesis of a variety of sulfur-containing biomolecules. Component of the suf operon, which is activated and required under specific conditions such as oxidative stress and iron limitation. Acts as a potent selenocysteine lyase in vitro, that mobilizes selenium from L-selenocysteine. Selenocysteine lyase activity is however unsure in vivo. Can also desulfinate L-cysteine sulfinate (3-sulfino-L-alanine).</text>
</comment>
<comment type="catalytic activity">
    <reaction evidence="14">
        <text>(sulfur carrier)-H + L-cysteine = (sulfur carrier)-SH + L-alanine</text>
        <dbReference type="Rhea" id="RHEA:43892"/>
        <dbReference type="Rhea" id="RHEA-COMP:14737"/>
        <dbReference type="Rhea" id="RHEA-COMP:14739"/>
        <dbReference type="ChEBI" id="CHEBI:29917"/>
        <dbReference type="ChEBI" id="CHEBI:35235"/>
        <dbReference type="ChEBI" id="CHEBI:57972"/>
        <dbReference type="ChEBI" id="CHEBI:64428"/>
        <dbReference type="EC" id="2.8.1.7"/>
    </reaction>
</comment>
<comment type="catalytic activity">
    <reaction evidence="2">
        <text>L-selenocysteine + AH2 = hydrogenselenide + L-alanine + A + H(+)</text>
        <dbReference type="Rhea" id="RHEA:11632"/>
        <dbReference type="ChEBI" id="CHEBI:13193"/>
        <dbReference type="ChEBI" id="CHEBI:15378"/>
        <dbReference type="ChEBI" id="CHEBI:17499"/>
        <dbReference type="ChEBI" id="CHEBI:29317"/>
        <dbReference type="ChEBI" id="CHEBI:57843"/>
        <dbReference type="ChEBI" id="CHEBI:57972"/>
        <dbReference type="EC" id="4.4.1.16"/>
    </reaction>
</comment>
<comment type="catalytic activity">
    <reaction evidence="2">
        <text>3-sulfino-L-alanine + H2O = sulfite + L-alanine + H(+)</text>
        <dbReference type="Rhea" id="RHEA:28278"/>
        <dbReference type="ChEBI" id="CHEBI:15377"/>
        <dbReference type="ChEBI" id="CHEBI:15378"/>
        <dbReference type="ChEBI" id="CHEBI:17359"/>
        <dbReference type="ChEBI" id="CHEBI:57972"/>
        <dbReference type="ChEBI" id="CHEBI:61085"/>
    </reaction>
</comment>
<comment type="cofactor">
    <cofactor evidence="2">
        <name>pyridoxal 5'-phosphate</name>
        <dbReference type="ChEBI" id="CHEBI:597326"/>
    </cofactor>
</comment>
<comment type="activity regulation">
    <text evidence="9 10 11">Displays a strong preference for selenocysteine as a substrate in vitro and is only very slightly active using cysteine. The interactions with SufE and the SufBCD complex act synergistically to enhance, up to 50-fold, its cysteine desulfurase activity.</text>
</comment>
<comment type="pathway">
    <text>Cofactor biosynthesis; iron-sulfur cluster biosynthesis.</text>
</comment>
<comment type="subunit">
    <text evidence="2 5 9 10 11">Homodimer (PubMed:10329673). Interacts with SufE and the SufBCD complex composed of SufB, SufC and SufD. The interaction with SufE is required to mediate the direct transfer of the sulfur atom from the S-sulfanylcysteine.</text>
</comment>
<comment type="interaction">
    <interactant intactId="EBI-1124981">
        <id>P77444</id>
    </interactant>
    <interactant intactId="EBI-1124973">
        <id>P76194</id>
        <label>sufE</label>
    </interactant>
    <organismsDiffer>false</organismsDiffer>
    <experiments>3</experiments>
</comment>
<comment type="subcellular location">
    <subcellularLocation>
        <location evidence="1">Cytoplasm</location>
    </subcellularLocation>
</comment>
<comment type="induction">
    <text>Suf operon is under both the Fe-dependent Fur repressor and the oxidative stress dependent OxyR activator.</text>
</comment>
<comment type="similarity">
    <text evidence="13">Belongs to the class-V pyridoxal-phosphate-dependent aminotransferase family. Csd subfamily.</text>
</comment>